<keyword id="KW-1003">Cell membrane</keyword>
<keyword id="KW-0378">Hydrolase</keyword>
<keyword id="KW-0472">Membrane</keyword>
<keyword id="KW-0812">Transmembrane</keyword>
<keyword id="KW-1133">Transmembrane helix</keyword>
<dbReference type="EC" id="3.6.1.27" evidence="1"/>
<dbReference type="EMBL" id="CP000678">
    <property type="protein sequence ID" value="ABQ87406.1"/>
    <property type="molecule type" value="Genomic_DNA"/>
</dbReference>
<dbReference type="RefSeq" id="WP_011954350.1">
    <property type="nucleotide sequence ID" value="NZ_CP117965.1"/>
</dbReference>
<dbReference type="SMR" id="A5UMH8"/>
<dbReference type="STRING" id="420247.Msm_1201"/>
<dbReference type="EnsemblBacteria" id="ABQ87406">
    <property type="protein sequence ID" value="ABQ87406"/>
    <property type="gene ID" value="Msm_1201"/>
</dbReference>
<dbReference type="GeneID" id="78817852"/>
<dbReference type="KEGG" id="msi:Msm_1201"/>
<dbReference type="PATRIC" id="fig|420247.28.peg.1200"/>
<dbReference type="eggNOG" id="arCOG04761">
    <property type="taxonomic scope" value="Archaea"/>
</dbReference>
<dbReference type="HOGENOM" id="CLU_060296_1_2_2"/>
<dbReference type="Proteomes" id="UP000001992">
    <property type="component" value="Chromosome"/>
</dbReference>
<dbReference type="GO" id="GO:0005886">
    <property type="term" value="C:plasma membrane"/>
    <property type="evidence" value="ECO:0007669"/>
    <property type="project" value="UniProtKB-SubCell"/>
</dbReference>
<dbReference type="GO" id="GO:0050380">
    <property type="term" value="F:undecaprenyl-diphosphatase activity"/>
    <property type="evidence" value="ECO:0007669"/>
    <property type="project" value="UniProtKB-UniRule"/>
</dbReference>
<dbReference type="HAMAP" id="MF_01006">
    <property type="entry name" value="Undec_diphosphatase"/>
    <property type="match status" value="1"/>
</dbReference>
<dbReference type="InterPro" id="IPR003824">
    <property type="entry name" value="UppP"/>
</dbReference>
<dbReference type="NCBIfam" id="TIGR00753">
    <property type="entry name" value="undec_PP_bacA"/>
    <property type="match status" value="1"/>
</dbReference>
<dbReference type="PANTHER" id="PTHR30622">
    <property type="entry name" value="UNDECAPRENYL-DIPHOSPHATASE"/>
    <property type="match status" value="1"/>
</dbReference>
<dbReference type="PANTHER" id="PTHR30622:SF2">
    <property type="entry name" value="UNDECAPRENYL-DIPHOSPHATASE"/>
    <property type="match status" value="1"/>
</dbReference>
<dbReference type="Pfam" id="PF02673">
    <property type="entry name" value="BacA"/>
    <property type="match status" value="1"/>
</dbReference>
<name>UPPP_METS3</name>
<reference key="1">
    <citation type="journal article" date="2007" name="Proc. Natl. Acad. Sci. U.S.A.">
        <title>Genomic and metabolic adaptations of Methanobrevibacter smithii to the human gut.</title>
        <authorList>
            <person name="Samuel B.S."/>
            <person name="Hansen E.E."/>
            <person name="Manchester J.K."/>
            <person name="Coutinho P.M."/>
            <person name="Henrissat B."/>
            <person name="Fulton R."/>
            <person name="Latreille P."/>
            <person name="Kim K."/>
            <person name="Wilson R.K."/>
            <person name="Gordon J.I."/>
        </authorList>
    </citation>
    <scope>NUCLEOTIDE SEQUENCE [LARGE SCALE GENOMIC DNA]</scope>
    <source>
        <strain>ATCC 35061 / DSM 861 / OCM 144 / PS</strain>
    </source>
</reference>
<proteinExistence type="inferred from homology"/>
<gene>
    <name evidence="1" type="primary">uppP</name>
    <name type="ordered locus">Msm_1201</name>
</gene>
<evidence type="ECO:0000255" key="1">
    <source>
        <dbReference type="HAMAP-Rule" id="MF_01006"/>
    </source>
</evidence>
<comment type="function">
    <text evidence="1">Catalyzes the dephosphorylation of undecaprenyl diphosphate (UPP).</text>
</comment>
<comment type="catalytic activity">
    <reaction evidence="1">
        <text>di-trans,octa-cis-undecaprenyl diphosphate + H2O = di-trans,octa-cis-undecaprenyl phosphate + phosphate + H(+)</text>
        <dbReference type="Rhea" id="RHEA:28094"/>
        <dbReference type="ChEBI" id="CHEBI:15377"/>
        <dbReference type="ChEBI" id="CHEBI:15378"/>
        <dbReference type="ChEBI" id="CHEBI:43474"/>
        <dbReference type="ChEBI" id="CHEBI:58405"/>
        <dbReference type="ChEBI" id="CHEBI:60392"/>
        <dbReference type="EC" id="3.6.1.27"/>
    </reaction>
</comment>
<comment type="subcellular location">
    <subcellularLocation>
        <location evidence="1">Cell membrane</location>
        <topology evidence="1">Multi-pass membrane protein</topology>
    </subcellularLocation>
</comment>
<comment type="similarity">
    <text evidence="1">Belongs to the UppP family.</text>
</comment>
<accession>A5UMH8</accession>
<protein>
    <recommendedName>
        <fullName evidence="1">Undecaprenyl-diphosphatase</fullName>
        <ecNumber evidence="1">3.6.1.27</ecNumber>
    </recommendedName>
    <alternativeName>
        <fullName evidence="1">Undecaprenyl pyrophosphate phosphatase</fullName>
    </alternativeName>
</protein>
<feature type="chain" id="PRO_0000303041" description="Undecaprenyl-diphosphatase">
    <location>
        <begin position="1"/>
        <end position="277"/>
    </location>
</feature>
<feature type="transmembrane region" description="Helical" evidence="1">
    <location>
        <begin position="1"/>
        <end position="21"/>
    </location>
</feature>
<feature type="transmembrane region" description="Helical" evidence="1">
    <location>
        <begin position="38"/>
        <end position="58"/>
    </location>
</feature>
<feature type="transmembrane region" description="Helical" evidence="1">
    <location>
        <begin position="93"/>
        <end position="113"/>
    </location>
</feature>
<feature type="transmembrane region" description="Helical" evidence="1">
    <location>
        <begin position="118"/>
        <end position="138"/>
    </location>
</feature>
<feature type="transmembrane region" description="Helical" evidence="1">
    <location>
        <begin position="168"/>
        <end position="188"/>
    </location>
</feature>
<feature type="transmembrane region" description="Helical" evidence="1">
    <location>
        <begin position="191"/>
        <end position="211"/>
    </location>
</feature>
<feature type="transmembrane region" description="Helical" evidence="1">
    <location>
        <begin position="222"/>
        <end position="242"/>
    </location>
</feature>
<feature type="transmembrane region" description="Helical" evidence="1">
    <location>
        <begin position="256"/>
        <end position="276"/>
    </location>
</feature>
<sequence>MDIIQAIIIGIVQGLTEFLPVSSSAHLIFAQNALGVESSLAFDVFLHLGSLIAVLWFFRADIIRMIQAFLLSIGDIIQHRFKEGFYSDPYKRLVWYVIIATIPVGLVGVLFESQVESLFAGALYVPAFFLFVTGTILYLSQRMNSGEVDLSNLSLKESIFMGLGQACAILPGLSRSGTTIAAGLVIGLDKEFAAKFSFILSIPAILGAFVVQLKDIGTITDFNALAILFGFLAALISGYLAIKWLLELIQKRSLDIFAYYCWIVGIIVFMGSITHLF</sequence>
<organism>
    <name type="scientific">Methanobrevibacter smithii (strain ATCC 35061 / DSM 861 / OCM 144 / PS)</name>
    <dbReference type="NCBI Taxonomy" id="420247"/>
    <lineage>
        <taxon>Archaea</taxon>
        <taxon>Methanobacteriati</taxon>
        <taxon>Methanobacteriota</taxon>
        <taxon>Methanomada group</taxon>
        <taxon>Methanobacteria</taxon>
        <taxon>Methanobacteriales</taxon>
        <taxon>Methanobacteriaceae</taxon>
        <taxon>Methanobrevibacter</taxon>
    </lineage>
</organism>